<gene>
    <name evidence="2" type="primary">ALOX15</name>
</gene>
<name>LOX15_RABIT</name>
<feature type="initiator methionine" description="Removed" evidence="11">
    <location>
        <position position="1"/>
    </location>
</feature>
<feature type="chain" id="PRO_0000220699" description="Polyunsaturated fatty acid lipoxygenase ALOX15">
    <location>
        <begin position="2"/>
        <end position="663"/>
    </location>
</feature>
<feature type="domain" description="PLAT" evidence="6">
    <location>
        <begin position="2"/>
        <end position="115"/>
    </location>
</feature>
<feature type="domain" description="Lipoxygenase" evidence="7">
    <location>
        <begin position="116"/>
        <end position="663"/>
    </location>
</feature>
<feature type="binding site" evidence="7 12">
    <location>
        <position position="361"/>
    </location>
    <ligand>
        <name>Fe cation</name>
        <dbReference type="ChEBI" id="CHEBI:24875"/>
        <note>catalytic</note>
    </ligand>
</feature>
<feature type="binding site" evidence="7 12">
    <location>
        <position position="366"/>
    </location>
    <ligand>
        <name>Fe cation</name>
        <dbReference type="ChEBI" id="CHEBI:24875"/>
        <note>catalytic</note>
    </ligand>
</feature>
<feature type="binding site" evidence="7 12">
    <location>
        <position position="541"/>
    </location>
    <ligand>
        <name>Fe cation</name>
        <dbReference type="ChEBI" id="CHEBI:24875"/>
        <note>catalytic</note>
    </ligand>
</feature>
<feature type="binding site" evidence="7 12">
    <location>
        <position position="545"/>
    </location>
    <ligand>
        <name>Fe cation</name>
        <dbReference type="ChEBI" id="CHEBI:24875"/>
        <note>catalytic</note>
    </ligand>
</feature>
<feature type="binding site" evidence="7 12">
    <location>
        <position position="663"/>
    </location>
    <ligand>
        <name>Fe cation</name>
        <dbReference type="ChEBI" id="CHEBI:24875"/>
        <note>catalytic</note>
    </ligand>
</feature>
<feature type="mutagenesis site" description="Changes the stereoselectivity of the oxygenation reaction to produce (12S)-HPETE instead of (15S)-HPETE." evidence="14">
    <original>F</original>
    <variation>L</variation>
    <location>
        <position position="353"/>
    </location>
</feature>
<feature type="mutagenesis site" description="Decreases 15 lipoxygenase activity. Exhibits hepoxilin A3 synthase activity." evidence="8">
    <original>I</original>
    <variation>A</variation>
    <location>
        <position position="418"/>
    </location>
</feature>
<feature type="sequence conflict" description="In Ref. 2; CAB10746." evidence="16" ref="2">
    <original>T</original>
    <variation>S</variation>
    <location>
        <position position="42"/>
    </location>
</feature>
<feature type="sequence conflict" description="In Ref. 2; CAB10746." evidence="16" ref="2">
    <original>R</original>
    <variation>K</variation>
    <location>
        <position position="64"/>
    </location>
</feature>
<feature type="sequence conflict" description="In Ref. 3; AAB86978." evidence="16" ref="3">
    <original>N</original>
    <variation>D</variation>
    <location>
        <position position="190"/>
    </location>
</feature>
<feature type="sequence conflict" description="In Ref. 3; AAB86978." evidence="16" ref="3">
    <original>I</original>
    <variation>V</variation>
    <location>
        <position position="194"/>
    </location>
</feature>
<feature type="sequence conflict" description="In Ref. 2; CAB10746." evidence="16" ref="2">
    <original>F</original>
    <variation>L</variation>
    <location>
        <position position="353"/>
    </location>
</feature>
<feature type="strand" evidence="20">
    <location>
        <begin position="3"/>
        <end position="10"/>
    </location>
</feature>
<feature type="strand" evidence="21">
    <location>
        <begin position="12"/>
        <end position="15"/>
    </location>
</feature>
<feature type="strand" evidence="20">
    <location>
        <begin position="19"/>
        <end position="30"/>
    </location>
</feature>
<feature type="strand" evidence="20">
    <location>
        <begin position="32"/>
        <end position="39"/>
    </location>
</feature>
<feature type="strand" evidence="20">
    <location>
        <begin position="46"/>
        <end position="52"/>
    </location>
</feature>
<feature type="strand" evidence="20">
    <location>
        <begin position="59"/>
        <end position="68"/>
    </location>
</feature>
<feature type="strand" evidence="20">
    <location>
        <begin position="70"/>
        <end position="72"/>
    </location>
</feature>
<feature type="strand" evidence="20">
    <location>
        <begin position="76"/>
        <end position="88"/>
    </location>
</feature>
<feature type="strand" evidence="20">
    <location>
        <begin position="93"/>
        <end position="101"/>
    </location>
</feature>
<feature type="strand" evidence="21">
    <location>
        <begin position="103"/>
        <end position="105"/>
    </location>
</feature>
<feature type="strand" evidence="20">
    <location>
        <begin position="107"/>
        <end position="110"/>
    </location>
</feature>
<feature type="helix" evidence="20">
    <location>
        <begin position="126"/>
        <end position="139"/>
    </location>
</feature>
<feature type="strand" evidence="20">
    <location>
        <begin position="152"/>
        <end position="154"/>
    </location>
</feature>
<feature type="helix" evidence="20">
    <location>
        <begin position="158"/>
        <end position="160"/>
    </location>
</feature>
<feature type="helix" evidence="20">
    <location>
        <begin position="163"/>
        <end position="165"/>
    </location>
</feature>
<feature type="helix" evidence="20">
    <location>
        <begin position="169"/>
        <end position="175"/>
    </location>
</feature>
<feature type="helix" evidence="20">
    <location>
        <begin position="189"/>
        <end position="192"/>
    </location>
</feature>
<feature type="helix" evidence="20">
    <location>
        <begin position="193"/>
        <end position="195"/>
    </location>
</feature>
<feature type="helix" evidence="20">
    <location>
        <begin position="201"/>
        <end position="206"/>
    </location>
</feature>
<feature type="helix" evidence="20">
    <location>
        <begin position="214"/>
        <end position="222"/>
    </location>
</feature>
<feature type="helix" evidence="20">
    <location>
        <begin position="226"/>
        <end position="235"/>
    </location>
</feature>
<feature type="helix" evidence="20">
    <location>
        <begin position="259"/>
        <end position="270"/>
    </location>
</feature>
<feature type="strand" evidence="20">
    <location>
        <begin position="274"/>
        <end position="278"/>
    </location>
</feature>
<feature type="helix" evidence="20">
    <location>
        <begin position="280"/>
        <end position="282"/>
    </location>
</feature>
<feature type="strand" evidence="20">
    <location>
        <begin position="301"/>
        <end position="306"/>
    </location>
</feature>
<feature type="turn" evidence="21">
    <location>
        <begin position="308"/>
        <end position="310"/>
    </location>
</feature>
<feature type="strand" evidence="20">
    <location>
        <begin position="312"/>
        <end position="318"/>
    </location>
</feature>
<feature type="helix" evidence="20">
    <location>
        <begin position="338"/>
        <end position="358"/>
    </location>
</feature>
<feature type="helix" evidence="20">
    <location>
        <begin position="359"/>
        <end position="365"/>
    </location>
</feature>
<feature type="helix" evidence="20">
    <location>
        <begin position="366"/>
        <end position="379"/>
    </location>
</feature>
<feature type="helix" evidence="20">
    <location>
        <begin position="385"/>
        <end position="390"/>
    </location>
</feature>
<feature type="helix" evidence="20">
    <location>
        <begin position="391"/>
        <end position="394"/>
    </location>
</feature>
<feature type="helix" evidence="20">
    <location>
        <begin position="397"/>
        <end position="404"/>
    </location>
</feature>
<feature type="turn" evidence="20">
    <location>
        <begin position="405"/>
        <end position="408"/>
    </location>
</feature>
<feature type="helix" evidence="20">
    <location>
        <begin position="414"/>
        <end position="418"/>
    </location>
</feature>
<feature type="turn" evidence="20">
    <location>
        <begin position="420"/>
        <end position="424"/>
    </location>
</feature>
<feature type="helix" evidence="20">
    <location>
        <begin position="425"/>
        <end position="434"/>
    </location>
</feature>
<feature type="helix" evidence="20">
    <location>
        <begin position="439"/>
        <end position="442"/>
    </location>
</feature>
<feature type="helix" evidence="20">
    <location>
        <begin position="444"/>
        <end position="450"/>
    </location>
</feature>
<feature type="helix" evidence="20">
    <location>
        <begin position="460"/>
        <end position="480"/>
    </location>
</feature>
<feature type="turn" evidence="20">
    <location>
        <begin position="481"/>
        <end position="483"/>
    </location>
</feature>
<feature type="helix" evidence="20">
    <location>
        <begin position="487"/>
        <end position="491"/>
    </location>
</feature>
<feature type="helix" evidence="20">
    <location>
        <begin position="494"/>
        <end position="504"/>
    </location>
</feature>
<feature type="turn" evidence="20">
    <location>
        <begin position="505"/>
        <end position="509"/>
    </location>
</feature>
<feature type="helix" evidence="20">
    <location>
        <begin position="511"/>
        <end position="514"/>
    </location>
</feature>
<feature type="helix" evidence="20">
    <location>
        <begin position="523"/>
        <end position="536"/>
    </location>
</feature>
<feature type="helix" evidence="20">
    <location>
        <begin position="539"/>
        <end position="545"/>
    </location>
</feature>
<feature type="helix" evidence="20">
    <location>
        <begin position="548"/>
        <end position="551"/>
    </location>
</feature>
<feature type="strand" evidence="20">
    <location>
        <begin position="552"/>
        <end position="554"/>
    </location>
</feature>
<feature type="helix" evidence="20">
    <location>
        <begin position="555"/>
        <end position="557"/>
    </location>
</feature>
<feature type="strand" evidence="20">
    <location>
        <begin position="568"/>
        <end position="570"/>
    </location>
</feature>
<feature type="helix" evidence="20">
    <location>
        <begin position="574"/>
        <end position="580"/>
    </location>
</feature>
<feature type="helix" evidence="20">
    <location>
        <begin position="584"/>
        <end position="596"/>
    </location>
</feature>
<feature type="helix" evidence="20">
    <location>
        <begin position="618"/>
        <end position="643"/>
    </location>
</feature>
<feature type="strand" evidence="20">
    <location>
        <begin position="645"/>
        <end position="647"/>
    </location>
</feature>
<feature type="turn" evidence="20">
    <location>
        <begin position="654"/>
        <end position="656"/>
    </location>
</feature>
<feature type="strand" evidence="20">
    <location>
        <begin position="657"/>
        <end position="660"/>
    </location>
</feature>
<evidence type="ECO:0000250" key="1"/>
<evidence type="ECO:0000250" key="2">
    <source>
        <dbReference type="UniProtKB" id="P16050"/>
    </source>
</evidence>
<evidence type="ECO:0000250" key="3">
    <source>
        <dbReference type="UniProtKB" id="P16469"/>
    </source>
</evidence>
<evidence type="ECO:0000250" key="4">
    <source>
        <dbReference type="UniProtKB" id="P39654"/>
    </source>
</evidence>
<evidence type="ECO:0000250" key="5">
    <source>
        <dbReference type="UniProtKB" id="Q02759"/>
    </source>
</evidence>
<evidence type="ECO:0000255" key="6">
    <source>
        <dbReference type="PROSITE-ProRule" id="PRU00152"/>
    </source>
</evidence>
<evidence type="ECO:0000255" key="7">
    <source>
        <dbReference type="PROSITE-ProRule" id="PRU00726"/>
    </source>
</evidence>
<evidence type="ECO:0000269" key="8">
    <source>
    </source>
</evidence>
<evidence type="ECO:0000269" key="9">
    <source>
    </source>
</evidence>
<evidence type="ECO:0000269" key="10">
    <source>
    </source>
</evidence>
<evidence type="ECO:0000269" key="11">
    <source>
    </source>
</evidence>
<evidence type="ECO:0000269" key="12">
    <source>
    </source>
</evidence>
<evidence type="ECO:0000269" key="13">
    <source>
    </source>
</evidence>
<evidence type="ECO:0000269" key="14">
    <source>
    </source>
</evidence>
<evidence type="ECO:0000303" key="15">
    <source>
    </source>
</evidence>
<evidence type="ECO:0000305" key="16"/>
<evidence type="ECO:0000305" key="17">
    <source>
    </source>
</evidence>
<evidence type="ECO:0000305" key="18">
    <source>
    </source>
</evidence>
<evidence type="ECO:0000305" key="19">
    <source>
    </source>
</evidence>
<evidence type="ECO:0007829" key="20">
    <source>
        <dbReference type="PDB" id="1LOX"/>
    </source>
</evidence>
<evidence type="ECO:0007829" key="21">
    <source>
        <dbReference type="PDB" id="2P0M"/>
    </source>
</evidence>
<organism>
    <name type="scientific">Oryctolagus cuniculus</name>
    <name type="common">Rabbit</name>
    <dbReference type="NCBI Taxonomy" id="9986"/>
    <lineage>
        <taxon>Eukaryota</taxon>
        <taxon>Metazoa</taxon>
        <taxon>Chordata</taxon>
        <taxon>Craniata</taxon>
        <taxon>Vertebrata</taxon>
        <taxon>Euteleostomi</taxon>
        <taxon>Mammalia</taxon>
        <taxon>Eutheria</taxon>
        <taxon>Euarchontoglires</taxon>
        <taxon>Glires</taxon>
        <taxon>Lagomorpha</taxon>
        <taxon>Leporidae</taxon>
        <taxon>Oryctolagus</taxon>
    </lineage>
</organism>
<keyword id="KW-0002">3D-structure</keyword>
<keyword id="KW-0106">Calcium</keyword>
<keyword id="KW-1003">Cell membrane</keyword>
<keyword id="KW-0963">Cytoplasm</keyword>
<keyword id="KW-0223">Dioxygenase</keyword>
<keyword id="KW-0903">Direct protein sequencing</keyword>
<keyword id="KW-0276">Fatty acid metabolism</keyword>
<keyword id="KW-0408">Iron</keyword>
<keyword id="KW-0551">Lipid droplet</keyword>
<keyword id="KW-0443">Lipid metabolism</keyword>
<keyword id="KW-0446">Lipid-binding</keyword>
<keyword id="KW-0472">Membrane</keyword>
<keyword id="KW-0479">Metal-binding</keyword>
<keyword id="KW-0560">Oxidoreductase</keyword>
<keyword id="KW-1185">Reference proteome</keyword>
<accession>P12530</accession>
<accession>O19043</accession>
<dbReference type="EC" id="1.13.11.31" evidence="14"/>
<dbReference type="EC" id="1.13.11.33" evidence="13 14"/>
<dbReference type="EC" id="1.13.11.-" evidence="5"/>
<dbReference type="EC" id="1.13.11.12" evidence="2"/>
<dbReference type="EMBL" id="M33291">
    <property type="protein sequence ID" value="AAA75014.1"/>
    <property type="molecule type" value="Genomic_DNA"/>
</dbReference>
<dbReference type="EMBL" id="Z97654">
    <property type="protein sequence ID" value="CAB10746.1"/>
    <property type="molecule type" value="mRNA"/>
</dbReference>
<dbReference type="EMBL" id="M27214">
    <property type="protein sequence ID" value="AAB86978.1"/>
    <property type="molecule type" value="mRNA"/>
</dbReference>
<dbReference type="EMBL" id="M22617">
    <property type="protein sequence ID" value="AAA31385.1"/>
    <property type="molecule type" value="mRNA"/>
</dbReference>
<dbReference type="PIR" id="JQ0018">
    <property type="entry name" value="JQ0018"/>
</dbReference>
<dbReference type="RefSeq" id="NP_001075751.1">
    <property type="nucleotide sequence ID" value="NM_001082282.1"/>
</dbReference>
<dbReference type="PDB" id="1LOX">
    <property type="method" value="X-ray"/>
    <property type="resolution" value="2.40 A"/>
    <property type="chains" value="A=2-663"/>
</dbReference>
<dbReference type="PDB" id="2P0M">
    <property type="method" value="X-ray"/>
    <property type="resolution" value="2.40 A"/>
    <property type="chains" value="A/B=2-663"/>
</dbReference>
<dbReference type="PDBsum" id="1LOX"/>
<dbReference type="PDBsum" id="2P0M"/>
<dbReference type="SMR" id="P12530"/>
<dbReference type="FunCoup" id="P12530">
    <property type="interactions" value="10"/>
</dbReference>
<dbReference type="STRING" id="9986.ENSOCUP00000017072"/>
<dbReference type="BindingDB" id="P12530"/>
<dbReference type="ChEMBL" id="CHEMBL4358"/>
<dbReference type="DrugCentral" id="P12530"/>
<dbReference type="SwissLipids" id="SLP:000001603"/>
<dbReference type="MetOSite" id="P12530"/>
<dbReference type="PaxDb" id="9986-ENSOCUP00000017072"/>
<dbReference type="GeneID" id="100009114"/>
<dbReference type="KEGG" id="ocu:100009114"/>
<dbReference type="CTD" id="239"/>
<dbReference type="CTD" id="246"/>
<dbReference type="eggNOG" id="ENOG502QQSP">
    <property type="taxonomic scope" value="Eukaryota"/>
</dbReference>
<dbReference type="InParanoid" id="P12530"/>
<dbReference type="OrthoDB" id="407298at2759"/>
<dbReference type="BRENDA" id="1.13.11.31">
    <property type="organism ID" value="1749"/>
</dbReference>
<dbReference type="BRENDA" id="1.13.11.33">
    <property type="organism ID" value="1749"/>
</dbReference>
<dbReference type="UniPathway" id="UPA00881"/>
<dbReference type="EvolutionaryTrace" id="P12530"/>
<dbReference type="PRO" id="PR:P12530"/>
<dbReference type="Proteomes" id="UP000001811">
    <property type="component" value="Unplaced"/>
</dbReference>
<dbReference type="GO" id="GO:0009898">
    <property type="term" value="C:cytoplasmic side of plasma membrane"/>
    <property type="evidence" value="ECO:0000250"/>
    <property type="project" value="UniProtKB"/>
</dbReference>
<dbReference type="GO" id="GO:0005829">
    <property type="term" value="C:cytosol"/>
    <property type="evidence" value="ECO:0000250"/>
    <property type="project" value="UniProtKB"/>
</dbReference>
<dbReference type="GO" id="GO:0005811">
    <property type="term" value="C:lipid droplet"/>
    <property type="evidence" value="ECO:0000250"/>
    <property type="project" value="UniProtKB"/>
</dbReference>
<dbReference type="GO" id="GO:0016020">
    <property type="term" value="C:membrane"/>
    <property type="evidence" value="ECO:0000250"/>
    <property type="project" value="UniProtKB"/>
</dbReference>
<dbReference type="GO" id="GO:0005886">
    <property type="term" value="C:plasma membrane"/>
    <property type="evidence" value="ECO:0000250"/>
    <property type="project" value="UniProtKB"/>
</dbReference>
<dbReference type="GO" id="GO:0004052">
    <property type="term" value="F:arachidonate 12(S)-lipoxygenase activity"/>
    <property type="evidence" value="ECO:0000314"/>
    <property type="project" value="UniProtKB"/>
</dbReference>
<dbReference type="GO" id="GO:0050473">
    <property type="term" value="F:arachidonate 15-lipoxygenase activity"/>
    <property type="evidence" value="ECO:0000314"/>
    <property type="project" value="UniProtKB"/>
</dbReference>
<dbReference type="GO" id="GO:0005506">
    <property type="term" value="F:iron ion binding"/>
    <property type="evidence" value="ECO:0000250"/>
    <property type="project" value="UniProtKB"/>
</dbReference>
<dbReference type="GO" id="GO:0016165">
    <property type="term" value="F:linoleate 13S-lipoxygenase activity"/>
    <property type="evidence" value="ECO:0000250"/>
    <property type="project" value="UniProtKB"/>
</dbReference>
<dbReference type="GO" id="GO:0005546">
    <property type="term" value="F:phosphatidylinositol-4,5-bisphosphate binding"/>
    <property type="evidence" value="ECO:0000250"/>
    <property type="project" value="UniProtKB"/>
</dbReference>
<dbReference type="GO" id="GO:0043277">
    <property type="term" value="P:apoptotic cell clearance"/>
    <property type="evidence" value="ECO:0000250"/>
    <property type="project" value="UniProtKB"/>
</dbReference>
<dbReference type="GO" id="GO:0019369">
    <property type="term" value="P:arachidonate metabolic process"/>
    <property type="evidence" value="ECO:0000314"/>
    <property type="project" value="UniProtKB"/>
</dbReference>
<dbReference type="GO" id="GO:0030282">
    <property type="term" value="P:bone mineralization"/>
    <property type="evidence" value="ECO:0000250"/>
    <property type="project" value="UniProtKB"/>
</dbReference>
<dbReference type="GO" id="GO:0071277">
    <property type="term" value="P:cellular response to calcium ion"/>
    <property type="evidence" value="ECO:0000250"/>
    <property type="project" value="UniProtKB"/>
</dbReference>
<dbReference type="GO" id="GO:0035963">
    <property type="term" value="P:cellular response to interleukin-13"/>
    <property type="evidence" value="ECO:0000250"/>
    <property type="project" value="UniProtKB"/>
</dbReference>
<dbReference type="GO" id="GO:0019395">
    <property type="term" value="P:fatty acid oxidation"/>
    <property type="evidence" value="ECO:0000314"/>
    <property type="project" value="UniProtKB"/>
</dbReference>
<dbReference type="GO" id="GO:0051122">
    <property type="term" value="P:hepoxilin biosynthetic process"/>
    <property type="evidence" value="ECO:0000250"/>
    <property type="project" value="UniProtKB"/>
</dbReference>
<dbReference type="GO" id="GO:0043651">
    <property type="term" value="P:linoleic acid metabolic process"/>
    <property type="evidence" value="ECO:0000314"/>
    <property type="project" value="UniProtKB"/>
</dbReference>
<dbReference type="GO" id="GO:0006629">
    <property type="term" value="P:lipid metabolic process"/>
    <property type="evidence" value="ECO:0000314"/>
    <property type="project" value="UniProtKB"/>
</dbReference>
<dbReference type="GO" id="GO:2001303">
    <property type="term" value="P:lipoxin A4 biosynthetic process"/>
    <property type="evidence" value="ECO:0000250"/>
    <property type="project" value="UniProtKB"/>
</dbReference>
<dbReference type="GO" id="GO:0019372">
    <property type="term" value="P:lipoxygenase pathway"/>
    <property type="evidence" value="ECO:0000314"/>
    <property type="project" value="UniProtKB"/>
</dbReference>
<dbReference type="GO" id="GO:0002820">
    <property type="term" value="P:negative regulation of adaptive immune response"/>
    <property type="evidence" value="ECO:0000250"/>
    <property type="project" value="UniProtKB"/>
</dbReference>
<dbReference type="GO" id="GO:0001503">
    <property type="term" value="P:ossification"/>
    <property type="evidence" value="ECO:0000250"/>
    <property type="project" value="UniProtKB"/>
</dbReference>
<dbReference type="GO" id="GO:0006646">
    <property type="term" value="P:phosphatidylethanolamine biosynthetic process"/>
    <property type="evidence" value="ECO:0000250"/>
    <property type="project" value="UniProtKB"/>
</dbReference>
<dbReference type="GO" id="GO:0030838">
    <property type="term" value="P:positive regulation of actin filament polymerization"/>
    <property type="evidence" value="ECO:0000250"/>
    <property type="project" value="UniProtKB"/>
</dbReference>
<dbReference type="GO" id="GO:0010811">
    <property type="term" value="P:positive regulation of cell-substrate adhesion"/>
    <property type="evidence" value="ECO:0000250"/>
    <property type="project" value="UniProtKB"/>
</dbReference>
<dbReference type="GO" id="GO:0070374">
    <property type="term" value="P:positive regulation of ERK1 and ERK2 cascade"/>
    <property type="evidence" value="ECO:0000250"/>
    <property type="project" value="UniProtKB"/>
</dbReference>
<dbReference type="GO" id="GO:1901074">
    <property type="term" value="P:regulation of engulfment of apoptotic cell"/>
    <property type="evidence" value="ECO:0000250"/>
    <property type="project" value="UniProtKB"/>
</dbReference>
<dbReference type="GO" id="GO:0050727">
    <property type="term" value="P:regulation of inflammatory response"/>
    <property type="evidence" value="ECO:0000250"/>
    <property type="project" value="UniProtKB"/>
</dbReference>
<dbReference type="GO" id="GO:0035358">
    <property type="term" value="P:regulation of peroxisome proliferator activated receptor signaling pathway"/>
    <property type="evidence" value="ECO:0000250"/>
    <property type="project" value="UniProtKB"/>
</dbReference>
<dbReference type="GO" id="GO:0034976">
    <property type="term" value="P:response to endoplasmic reticulum stress"/>
    <property type="evidence" value="ECO:0000250"/>
    <property type="project" value="UniProtKB"/>
</dbReference>
<dbReference type="GO" id="GO:0042060">
    <property type="term" value="P:wound healing"/>
    <property type="evidence" value="ECO:0000250"/>
    <property type="project" value="UniProtKB"/>
</dbReference>
<dbReference type="CDD" id="cd01753">
    <property type="entry name" value="PLAT_LOX"/>
    <property type="match status" value="1"/>
</dbReference>
<dbReference type="FunFam" id="3.10.450.60:FF:000004">
    <property type="entry name" value="Arachidonate 12-lipoxygenase, 12S-type"/>
    <property type="match status" value="1"/>
</dbReference>
<dbReference type="FunFam" id="1.20.245.10:FF:000001">
    <property type="entry name" value="Arachidonate 5-lipoxygenase a"/>
    <property type="match status" value="1"/>
</dbReference>
<dbReference type="FunFam" id="2.60.60.20:FF:000002">
    <property type="entry name" value="Arachidonate 5-lipoxygenase a"/>
    <property type="match status" value="1"/>
</dbReference>
<dbReference type="Gene3D" id="3.10.450.60">
    <property type="match status" value="1"/>
</dbReference>
<dbReference type="Gene3D" id="1.20.245.10">
    <property type="entry name" value="Lipoxygenase-1, Domain 5"/>
    <property type="match status" value="1"/>
</dbReference>
<dbReference type="Gene3D" id="2.60.60.20">
    <property type="entry name" value="PLAT/LH2 domain"/>
    <property type="match status" value="1"/>
</dbReference>
<dbReference type="InterPro" id="IPR000907">
    <property type="entry name" value="LipOase"/>
</dbReference>
<dbReference type="InterPro" id="IPR013819">
    <property type="entry name" value="LipOase_C"/>
</dbReference>
<dbReference type="InterPro" id="IPR036226">
    <property type="entry name" value="LipOase_C_sf"/>
</dbReference>
<dbReference type="InterPro" id="IPR020834">
    <property type="entry name" value="LipOase_CS"/>
</dbReference>
<dbReference type="InterPro" id="IPR020833">
    <property type="entry name" value="LipOase_Fe_BS"/>
</dbReference>
<dbReference type="InterPro" id="IPR001885">
    <property type="entry name" value="LipOase_mml"/>
</dbReference>
<dbReference type="InterPro" id="IPR001024">
    <property type="entry name" value="PLAT/LH2_dom"/>
</dbReference>
<dbReference type="InterPro" id="IPR036392">
    <property type="entry name" value="PLAT/LH2_dom_sf"/>
</dbReference>
<dbReference type="InterPro" id="IPR042062">
    <property type="entry name" value="PLAT_LOX_verte"/>
</dbReference>
<dbReference type="PANTHER" id="PTHR11771">
    <property type="entry name" value="LIPOXYGENASE"/>
    <property type="match status" value="1"/>
</dbReference>
<dbReference type="Pfam" id="PF00305">
    <property type="entry name" value="Lipoxygenase"/>
    <property type="match status" value="1"/>
</dbReference>
<dbReference type="Pfam" id="PF01477">
    <property type="entry name" value="PLAT"/>
    <property type="match status" value="1"/>
</dbReference>
<dbReference type="PRINTS" id="PR00087">
    <property type="entry name" value="LIPOXYGENASE"/>
</dbReference>
<dbReference type="PRINTS" id="PR00467">
    <property type="entry name" value="MAMLPOXGNASE"/>
</dbReference>
<dbReference type="SMART" id="SM00308">
    <property type="entry name" value="LH2"/>
    <property type="match status" value="1"/>
</dbReference>
<dbReference type="SUPFAM" id="SSF49723">
    <property type="entry name" value="Lipase/lipooxygenase domain (PLAT/LH2 domain)"/>
    <property type="match status" value="1"/>
</dbReference>
<dbReference type="SUPFAM" id="SSF48484">
    <property type="entry name" value="Lipoxigenase"/>
    <property type="match status" value="1"/>
</dbReference>
<dbReference type="PROSITE" id="PS00711">
    <property type="entry name" value="LIPOXYGENASE_1"/>
    <property type="match status" value="1"/>
</dbReference>
<dbReference type="PROSITE" id="PS00081">
    <property type="entry name" value="LIPOXYGENASE_2"/>
    <property type="match status" value="1"/>
</dbReference>
<dbReference type="PROSITE" id="PS51393">
    <property type="entry name" value="LIPOXYGENASE_3"/>
    <property type="match status" value="1"/>
</dbReference>
<dbReference type="PROSITE" id="PS50095">
    <property type="entry name" value="PLAT"/>
    <property type="match status" value="1"/>
</dbReference>
<proteinExistence type="evidence at protein level"/>
<reference key="1">
    <citation type="journal article" date="1989" name="Gene">
        <title>The promoter structure and complete sequence of the gene encoding the rabbit erythroid cell-specific 15-lipoxygenase.</title>
        <authorList>
            <person name="O'Prey J."/>
            <person name="Chester J."/>
            <person name="Thiele B.J."/>
            <person name="Janetzki S."/>
            <person name="Prehn S."/>
            <person name="Fleming J."/>
            <person name="Harrison P.R."/>
        </authorList>
    </citation>
    <scope>NUCLEOTIDE SEQUENCE [GENOMIC DNA]</scope>
</reference>
<reference key="2">
    <citation type="journal article" date="1998" name="J. Mol. Biol.">
        <title>Simultaneous expression of leukocyte-type 12-lipoxygenase and reticulocyte-type 15-lipoxygenase in rabbits.</title>
        <authorList>
            <person name="Berger M."/>
            <person name="Schwarz K."/>
            <person name="Thiele H."/>
            <person name="Reimann I."/>
            <person name="Huth A."/>
            <person name="Borngraeber S."/>
            <person name="Kuehn H."/>
            <person name="Thiele B.-J."/>
        </authorList>
    </citation>
    <scope>NUCLEOTIDE SEQUENCE [MRNA]</scope>
    <scope>FUNCTION</scope>
    <scope>CATALYTIC ACTIVITY</scope>
    <scope>PATHWAY</scope>
    <scope>MUTAGENESIS OF PHE-353</scope>
</reference>
<reference key="3">
    <citation type="journal article" date="1989" name="Gene">
        <title>The complete sequence of the rabbit erythroid cell-specific 15-lipoxygenase mRNA: comparison of the predicted amino acid sequence of the erythrocyte lipoxygenase with other lipoxygenases.</title>
        <authorList>
            <person name="Fleming J."/>
            <person name="Thiele B.J."/>
            <person name="Chester J."/>
            <person name="O'Prey J."/>
            <person name="Janetzki S."/>
            <person name="Aitken A."/>
            <person name="Anton I.A."/>
            <person name="Rapoport S.M."/>
            <person name="Harrison P.R."/>
        </authorList>
    </citation>
    <scope>NUCLEOTIDE SEQUENCE [MRNA]</scope>
    <scope>PROTEIN SEQUENCE OF 2-31</scope>
</reference>
<reference key="4">
    <citation type="journal article" date="1987" name="Gene">
        <title>Cloning of a rabbit erythroid-cell-specific lipoxygenase mRNA.</title>
        <authorList>
            <person name="Thiele B.J."/>
            <person name="Fleming J."/>
            <person name="Kasturi K."/>
            <person name="O'Prey J."/>
            <person name="Black E."/>
            <person name="Chester J."/>
            <person name="Rapoport S.M."/>
            <person name="Harrison P.R."/>
        </authorList>
    </citation>
    <scope>NUCLEOTIDE SEQUENCE [MRNA] OF 1-31</scope>
</reference>
<reference key="5">
    <citation type="journal article" date="1990" name="Biomed. Biochim. Acta">
        <title>Structure of the mRNA and of the gene coding for the rabbit erythroid 15-lipoxygenase.</title>
        <authorList>
            <person name="Thiele B.J."/>
            <person name="Fleming J."/>
            <person name="Chester J."/>
            <person name="O'Prey J."/>
            <person name="Prehn S."/>
            <person name="Janetzki S."/>
            <person name="Rapoport S.M."/>
            <person name="Harrison P.R."/>
        </authorList>
    </citation>
    <scope>NUCLEOTIDE SEQUENCE [MRNA]</scope>
    <scope>GENE STRUCTURE</scope>
</reference>
<reference key="6">
    <citation type="journal article" date="1998" name="Blood">
        <title>Membrane translocation of 15-lipoxygenase in hematopoietic cells is calcium-dependent and activates the oxygenase activity of the enzyme.</title>
        <authorList>
            <person name="Brinckmann R."/>
            <person name="Schnurr K."/>
            <person name="Heydeck D."/>
            <person name="Rosenbach T."/>
            <person name="Kolde G."/>
            <person name="Kuehn H."/>
        </authorList>
    </citation>
    <scope>CATALYTIC ACTIVITY</scope>
    <scope>FUNCTION</scope>
    <scope>SUBCELLULAR LOCATION</scope>
    <scope>TISSUE SPECIFICITY</scope>
</reference>
<reference key="7">
    <citation type="journal article" date="2004" name="J. Biol. Chem.">
        <title>The rat leukocyte-type 12-lipoxygenase exhibits an intrinsic hepoxilin A3 synthase activity.</title>
        <authorList>
            <person name="Nigam S."/>
            <person name="Patabhiraman S."/>
            <person name="Ciccoli R."/>
            <person name="Ishdorj G."/>
            <person name="Schwarz K."/>
            <person name="Petrucev B."/>
            <person name="Kuehn H."/>
            <person name="Haeggstroem J.Z."/>
        </authorList>
    </citation>
    <scope>FUNCTION</scope>
    <scope>CATALYTIC ACTIVITY</scope>
    <scope>MUTAGENESIS OF ILE-418</scope>
    <scope>BIOPHYSICOCHEMICAL PROPERTIES</scope>
</reference>
<reference key="8">
    <citation type="journal article" date="2007" name="Arch. Biochem. Biophys.">
        <title>Oxidative metabolism of lipoamino acids and vanilloids by lipoxygenases and cyclooxygenases.</title>
        <authorList>
            <person name="Prusakiewicz J.J."/>
            <person name="Turman M.V."/>
            <person name="Vila A."/>
            <person name="Ball H.L."/>
            <person name="Al-Mestarihi A.H."/>
            <person name="Di Marzo V."/>
            <person name="Marnett L.J."/>
        </authorList>
    </citation>
    <scope>BIOPHYSICOCHEMICAL PROPERTIES</scope>
    <scope>CATALYTIC ACTIVITY</scope>
    <scope>FUNCTION</scope>
</reference>
<reference key="9">
    <citation type="journal article" date="2008" name="Biochemistry">
        <title>Oxidative metabolism of a fatty acid amide hydrolase-regulated lipid, arachidonoyltaurine.</title>
        <authorList>
            <person name="Turman M.V."/>
            <person name="Kingsley P.J."/>
            <person name="Rouzer C.A."/>
            <person name="Cravatt B.F."/>
            <person name="Marnett L.J."/>
        </authorList>
    </citation>
    <scope>CATALYTIC ACTIVITY</scope>
    <scope>FUNCTION</scope>
</reference>
<reference key="10">
    <citation type="journal article" date="1997" name="Nat. Struct. Biol.">
        <title>The structure of mammalian 15-lipoxygenase reveals similarity to the lipases and the determinants of substrate specificity.</title>
        <authorList>
            <person name="Gillmor S.A."/>
            <person name="Villasenor A."/>
            <person name="Fletterick R."/>
            <person name="Sigal E."/>
            <person name="Browner M.F."/>
        </authorList>
    </citation>
    <scope>X-RAY CRYSTALLOGRAPHY (2.4 ANGSTROMS) IN COMPLEX WITH IRON AND SUBSTRATE ANALOG</scope>
</reference>
<sequence length="663" mass="75310">MGVYRVCVSTGASIYAGSKNKVELWLVGQHGEVELGSCLRPTRNKEEEFKVNVSKYLGSLLFVRLRKKHFLKEDAWFCNWISVQALGAAEDKYWFPCYRWVVGDGVQSLPVGTGCTTVGDPQGLFQKHREQELEERRKLYQWGSWKEGLILNVAGSKLTDLPVDERFLEDKKIDFEASLAWGLAELALKNSLNILAPWKTLDDFNRIFWCGRSKLARRVRDSWQEDSLFGYQFLNGANPMLLRRSVQLPARLVFPPGMEELQAQLEKELKAGTLFEADFALLDNIKANVILYCQQYLAAPLVMLKLQPDGKLMPMVIQLHLPKIGSSPPPLFLPTDPPMVWLLAKCWVRSSDFQVHELNSHLLRGHLMAEVFTVATMRCLPSIHPVFKLIVPHLRYTLEINVRARNGLVSDFGIFDQIMSTGGGGHVQLLQQAGAFLTYRSFCPPDDLADRGLLGVESSFYAQDALRLWEIISRYVQGIMGLYYKTDEAVRDDLELQSWCREITEIGLQGAQKQGFPTSLQSVAQACHFVTMCIFTCTGQHSSIHLGQLDWFTWVPNAPCTMRLPPPTTKDATLETVMATLPNLHQSSLQMSIVWQLGRDQPIMVPLGQHQEEYFSGPEPRAVLEKFREELAIMDKEIEVRNEKLDIPYEYLRPSIVENSVAI</sequence>
<comment type="function">
    <text evidence="2 4 8 9 10 13 14">Non-heme iron-containing dioxygenase that catalyzes the stereo-specific peroxidation of free and esterified polyunsaturated fatty acids generating a spectrum of bioactive lipid mediators (PubMed:15123652, PubMed:17493578, PubMed:18311922, PubMed:9414270, PubMed:9600854). It inserts peroxyl groups at C12 or C15 of arachidonate ((5Z,8Z,11Z,14Z)-eicosatetraenoate) producing both 12-hydroperoxyeicosatetraenoate/12-HPETE and 15-hydroperoxyeicosatetraenoate/15-HPETE (PubMed:15123652, PubMed:17493578, PubMed:9414270, PubMed:9600854). It may then act on 12-HPETE to produce hepoxilins, which may show pro-inflammatory properties (PubMed:15123652). Can also peroxidize linoleate ((9Z,12Z)-octadecadienoate) to 13-hydroperoxyoctadecadienoate. May participate in the sequential oxidations of DHA ((4Z,7Z,10Z,13Z,16Z,19Z)-docosahexaenoate) to generate specialized pro-resolving mediators (SPMs)like resolvin D5 ((7S,17S)-diHPDHA) and (7S,14S)-diHPDHA, that actively down-regulate the immune response and have anti-aggregation properties with platelets. Can convert epoxy fatty acids to hydroperoxy-epoxides derivatives followed by an intramolecular nucleophilic substitution leading to the formation of monocyclic endoperoxides (By similarity). Plays an important role during the maintenance of self-tolerance by peroxidizing membrane-bound phosphatidylethanolamine which can then signal the sorting process for clearance of apoptotic cells during inflammation and prevent an autoimmune response. In addition to its role in the immune and inflammatory responses, this enzyme may play a role in epithelial wound healing in the cornea through production of lipoxin A4 (LXA(4)) and docosahexaenoic acid-derived neuroprotectin D1 (NPD1; 10R,17S-HDHA), both lipid autacoids exhibit anti-inflammatory and neuroprotective properties. Furthermore, it may regulate actin polymerization which is crucial for several biological processes such as the phagocytosis of apoptotic cells. It is also implicated in the generation of endogenous ligands for peroxisome proliferator activated receptor (PPAR-gamma), hence modulating macrophage development and function. It may also exert a negative effect on skeletal development by regulating bone mass through this pathway. As well as participates in ER stress and downstream inflammation in adipocytes, pancreatic islets, and liver (By similarity). Finally, it is also involved in the cellular response to IL13/interleukin-13 (By similarity).</text>
</comment>
<comment type="catalytic activity">
    <reaction evidence="14">
        <text>(5Z,8Z,11Z,14Z)-eicosatetraenoate + O2 = (12S)-hydroperoxy-(5Z,8Z,10E,14Z)-eicosatetraenoate</text>
        <dbReference type="Rhea" id="RHEA:10428"/>
        <dbReference type="ChEBI" id="CHEBI:15379"/>
        <dbReference type="ChEBI" id="CHEBI:32395"/>
        <dbReference type="ChEBI" id="CHEBI:57444"/>
        <dbReference type="EC" id="1.13.11.31"/>
    </reaction>
    <physiologicalReaction direction="left-to-right" evidence="19">
        <dbReference type="Rhea" id="RHEA:10429"/>
    </physiologicalReaction>
</comment>
<comment type="catalytic activity">
    <reaction evidence="8 9 13 14">
        <text>(5Z,8Z,11Z,14Z)-eicosatetraenoate + O2 = (15S)-hydroperoxy-(5Z,8Z,11Z,13E)-eicosatetraenoate</text>
        <dbReference type="Rhea" id="RHEA:16869"/>
        <dbReference type="ChEBI" id="CHEBI:15379"/>
        <dbReference type="ChEBI" id="CHEBI:32395"/>
        <dbReference type="ChEBI" id="CHEBI:57446"/>
        <dbReference type="EC" id="1.13.11.33"/>
    </reaction>
    <physiologicalReaction direction="left-to-right" evidence="17">
        <dbReference type="Rhea" id="RHEA:16870"/>
    </physiologicalReaction>
</comment>
<comment type="catalytic activity">
    <reaction evidence="2">
        <text>(9Z,12Z)-octadecadienoate + O2 = (13S)-hydroperoxy-(9Z,11E)-octadecadienoate</text>
        <dbReference type="Rhea" id="RHEA:22780"/>
        <dbReference type="ChEBI" id="CHEBI:15379"/>
        <dbReference type="ChEBI" id="CHEBI:30245"/>
        <dbReference type="ChEBI" id="CHEBI:57466"/>
        <dbReference type="EC" id="1.13.11.12"/>
    </reaction>
    <physiologicalReaction direction="left-to-right" evidence="2">
        <dbReference type="Rhea" id="RHEA:22781"/>
    </physiologicalReaction>
</comment>
<comment type="catalytic activity">
    <reaction evidence="2">
        <text>(5Z,8Z,11Z,14Z)-eicosatetraenoate + 2 O2 = (14R,15S)-dihydroperoxy-(5Z,8Z,10E,12E)-eicosatetraenoate</text>
        <dbReference type="Rhea" id="RHEA:50928"/>
        <dbReference type="ChEBI" id="CHEBI:15379"/>
        <dbReference type="ChEBI" id="CHEBI:32395"/>
        <dbReference type="ChEBI" id="CHEBI:133900"/>
    </reaction>
    <physiologicalReaction direction="left-to-right" evidence="2">
        <dbReference type="Rhea" id="RHEA:50929"/>
    </physiologicalReaction>
</comment>
<comment type="catalytic activity">
    <reaction evidence="2">
        <text>(5Z,8Z,11Z,14Z)-eicosatetraenoate + 2 O2 = (8S,15S)-dihydroperoxy-(5Z,9E,11Z,13E)-eicosatetraenoate</text>
        <dbReference type="Rhea" id="RHEA:50924"/>
        <dbReference type="ChEBI" id="CHEBI:15379"/>
        <dbReference type="ChEBI" id="CHEBI:32395"/>
        <dbReference type="ChEBI" id="CHEBI:133899"/>
    </reaction>
    <physiologicalReaction direction="left-to-right" evidence="2">
        <dbReference type="Rhea" id="RHEA:50925"/>
    </physiologicalReaction>
</comment>
<comment type="catalytic activity">
    <reaction evidence="2">
        <text>(14S,15R)-epoxy-(5Z,8Z,11Z)-eicosatrienoate + O2 = (8S)-hydroperoxy-(14S,15R)-epoxy-(5Z,9E,11Z)-eicosatrienoate</text>
        <dbReference type="Rhea" id="RHEA:50288"/>
        <dbReference type="ChEBI" id="CHEBI:15379"/>
        <dbReference type="ChEBI" id="CHEBI:131964"/>
        <dbReference type="ChEBI" id="CHEBI:132068"/>
    </reaction>
    <physiologicalReaction direction="left-to-right" evidence="2">
        <dbReference type="Rhea" id="RHEA:50289"/>
    </physiologicalReaction>
</comment>
<comment type="catalytic activity">
    <reaction evidence="2">
        <text>(14S,15R)-epoxy-(5Z,8Z,11Z)-eicosatrienoate + O2 = (12S)-hydroperoxy-(14S,15R)-epoxy-(5Z,8Z,10E)-eicosatrienoate</text>
        <dbReference type="Rhea" id="RHEA:50284"/>
        <dbReference type="ChEBI" id="CHEBI:15379"/>
        <dbReference type="ChEBI" id="CHEBI:131964"/>
        <dbReference type="ChEBI" id="CHEBI:132065"/>
    </reaction>
    <physiologicalReaction direction="left-to-right" evidence="2">
        <dbReference type="Rhea" id="RHEA:50285"/>
    </physiologicalReaction>
</comment>
<comment type="catalytic activity">
    <reaction evidence="2">
        <text>(14R,15S)-epoxy-(5Z,8Z,11Z)-eicosatrienoate + O2 = (5S)-hydroperoxy-(14R,15S)-epoxy-(6E,8Z,11Z)-eicosatrienoate</text>
        <dbReference type="Rhea" id="RHEA:50280"/>
        <dbReference type="ChEBI" id="CHEBI:15379"/>
        <dbReference type="ChEBI" id="CHEBI:131965"/>
        <dbReference type="ChEBI" id="CHEBI:132067"/>
    </reaction>
    <physiologicalReaction direction="left-to-right" evidence="2">
        <dbReference type="Rhea" id="RHEA:50281"/>
    </physiologicalReaction>
</comment>
<comment type="catalytic activity">
    <reaction evidence="2">
        <text>(14R,15S)-epoxy-(5Z,8Z,11Z)-eicosatrienoate + O2 = (12S)-hydroperoxy-(14R,15S)-epoxy-(5Z,8Z,10E)-eicosatrienoate</text>
        <dbReference type="Rhea" id="RHEA:50276"/>
        <dbReference type="ChEBI" id="CHEBI:15379"/>
        <dbReference type="ChEBI" id="CHEBI:131965"/>
        <dbReference type="ChEBI" id="CHEBI:132063"/>
    </reaction>
    <physiologicalReaction direction="left-to-right" evidence="2">
        <dbReference type="Rhea" id="RHEA:50277"/>
    </physiologicalReaction>
</comment>
<comment type="catalytic activity">
    <reaction evidence="2">
        <text>(15R)-hydroperoxy-(5Z,8Z,11Z,13E)-eicosatetraenoate = 15-oxo-(5Z,8Z,11Z,13E)-eicosatetraenoate + H2O</text>
        <dbReference type="Rhea" id="RHEA:50152"/>
        <dbReference type="ChEBI" id="CHEBI:15377"/>
        <dbReference type="ChEBI" id="CHEBI:57410"/>
        <dbReference type="ChEBI" id="CHEBI:82626"/>
    </reaction>
    <physiologicalReaction direction="left-to-right" evidence="2">
        <dbReference type="Rhea" id="RHEA:50153"/>
    </physiologicalReaction>
</comment>
<comment type="catalytic activity">
    <reaction evidence="2">
        <text>(15S)-hydroperoxy-(5Z,8Z,11Z,13E)-eicosatetraenoate = (14S,15S)-epoxy-(5Z,8Z,10E,12E)-eicosatetraenoate + H2O</text>
        <dbReference type="Rhea" id="RHEA:50140"/>
        <dbReference type="ChEBI" id="CHEBI:15377"/>
        <dbReference type="ChEBI" id="CHEBI:57446"/>
        <dbReference type="ChEBI" id="CHEBI:132070"/>
    </reaction>
    <physiologicalReaction direction="left-to-right" evidence="2">
        <dbReference type="Rhea" id="RHEA:50141"/>
    </physiologicalReaction>
</comment>
<comment type="catalytic activity">
    <reaction evidence="5">
        <text>(12S)-hydroperoxy-(5Z,8Z,10E,14Z)-eicosatetraenoate = (8S)-hydroxy-(11S,12S)-epoxy-(5Z,9E,14Z)-eicosatrienoate</text>
        <dbReference type="Rhea" id="RHEA:50216"/>
        <dbReference type="ChEBI" id="CHEBI:57444"/>
        <dbReference type="ChEBI" id="CHEBI:132129"/>
    </reaction>
    <physiologicalReaction direction="left-to-right" evidence="5">
        <dbReference type="Rhea" id="RHEA:50217"/>
    </physiologicalReaction>
</comment>
<comment type="catalytic activity">
    <reaction evidence="3">
        <text>(4Z,7Z,10Z,13Z,16Z)-docosapentaenoate + O2 = 14-hydroperoxy-(4Z,7Z,10Z,12E,16Z)-docosapentaenoate</text>
        <dbReference type="Rhea" id="RHEA:50824"/>
        <dbReference type="ChEBI" id="CHEBI:15379"/>
        <dbReference type="ChEBI" id="CHEBI:77226"/>
        <dbReference type="ChEBI" id="CHEBI:133799"/>
    </reaction>
    <physiologicalReaction direction="left-to-right" evidence="3">
        <dbReference type="Rhea" id="RHEA:50825"/>
    </physiologicalReaction>
</comment>
<comment type="catalytic activity">
    <reaction evidence="3">
        <text>(7Z,10Z,13Z,16Z,19Z)-docosapentaenoate + O2 = 14-hydroperoxy-(7Z,10Z,12E,16Z,19Z)-docosapentaenoate</text>
        <dbReference type="Rhea" id="RHEA:50836"/>
        <dbReference type="ChEBI" id="CHEBI:15379"/>
        <dbReference type="ChEBI" id="CHEBI:77224"/>
        <dbReference type="ChEBI" id="CHEBI:133798"/>
    </reaction>
    <physiologicalReaction direction="left-to-right" evidence="3">
        <dbReference type="Rhea" id="RHEA:50837"/>
    </physiologicalReaction>
</comment>
<comment type="catalytic activity">
    <reaction evidence="2">
        <text>(4Z,7Z,10Z,13Z,16Z,19Z)-docosahexaenoate + O2 = (14S)-hydroperoxy-(4Z,7Z,10Z,12E,16Z,19Z)-docosahexaenoate</text>
        <dbReference type="Rhea" id="RHEA:41332"/>
        <dbReference type="ChEBI" id="CHEBI:15379"/>
        <dbReference type="ChEBI" id="CHEBI:77016"/>
        <dbReference type="ChEBI" id="CHEBI:78048"/>
    </reaction>
    <physiologicalReaction direction="left-to-right" evidence="2">
        <dbReference type="Rhea" id="RHEA:41333"/>
    </physiologicalReaction>
</comment>
<comment type="catalytic activity">
    <reaction evidence="2">
        <text>(4Z,7Z,10Z,13Z,16Z,19Z)-docosahexaenoate + O2 = (17S)-hydroperoxy-(4Z,7Z,10Z,13Z,15E,19Z)-docosahexaenoate</text>
        <dbReference type="Rhea" id="RHEA:50840"/>
        <dbReference type="ChEBI" id="CHEBI:15379"/>
        <dbReference type="ChEBI" id="CHEBI:77016"/>
        <dbReference type="ChEBI" id="CHEBI:133795"/>
    </reaction>
    <physiologicalReaction direction="left-to-right" evidence="2">
        <dbReference type="Rhea" id="RHEA:50841"/>
    </physiologicalReaction>
</comment>
<comment type="catalytic activity">
    <reaction evidence="2">
        <text>(7S)-hydroperoxy-(4Z,8E,10Z,13Z,16Z,19Z)-docosahexaenoate + O2 = (7S,14S)-dihydroperoxy-(4Z,8E,10Z,12E,16Z,19Z)-docosahexaenoate</text>
        <dbReference type="Rhea" id="RHEA:64724"/>
        <dbReference type="ChEBI" id="CHEBI:15379"/>
        <dbReference type="ChEBI" id="CHEBI:156049"/>
        <dbReference type="ChEBI" id="CHEBI:156082"/>
    </reaction>
    <physiologicalReaction direction="left-to-right" evidence="2">
        <dbReference type="Rhea" id="RHEA:64725"/>
    </physiologicalReaction>
</comment>
<comment type="catalytic activity">
    <reaction evidence="2">
        <text>(7S)-hydroperoxy-(4Z,8E,10Z,13Z,16Z,19Z)-docosahexaenoate + O2 = (7S,17S)-dihydroperoxy-(4Z,8E,10Z,13Z,15E,19Z)-docosahexaenoate</text>
        <dbReference type="Rhea" id="RHEA:64728"/>
        <dbReference type="ChEBI" id="CHEBI:15379"/>
        <dbReference type="ChEBI" id="CHEBI:140349"/>
        <dbReference type="ChEBI" id="CHEBI:156049"/>
    </reaction>
    <physiologicalReaction direction="left-to-right" evidence="2">
        <dbReference type="Rhea" id="RHEA:64729"/>
    </physiologicalReaction>
</comment>
<comment type="catalytic activity">
    <reaction evidence="2">
        <text>(4Z,7Z,10Z,13Z,16Z,19Z)-docosahexaenoate + O2 = (11S)-hydroperoxy-(4Z,7Z,9E,13Z,16Z,19Z)-docosahexaenoate</text>
        <dbReference type="Rhea" id="RHEA:64732"/>
        <dbReference type="ChEBI" id="CHEBI:15379"/>
        <dbReference type="ChEBI" id="CHEBI:77016"/>
        <dbReference type="ChEBI" id="CHEBI:156131"/>
    </reaction>
    <physiologicalReaction direction="left-to-right" evidence="2">
        <dbReference type="Rhea" id="RHEA:64733"/>
    </physiologicalReaction>
</comment>
<comment type="catalytic activity">
    <reaction evidence="10">
        <text>N-(5Z,8Z,11Z,14Z)-eicosatetraenoyl-taurine + O2 = N-(15S)-hydroperoxy-(5Z,8Z,11Z,13E)-eicosatetraenoyl-taurine</text>
        <dbReference type="Rhea" id="RHEA:50156"/>
        <dbReference type="ChEBI" id="CHEBI:15379"/>
        <dbReference type="ChEBI" id="CHEBI:132060"/>
        <dbReference type="ChEBI" id="CHEBI:132062"/>
    </reaction>
    <physiologicalReaction direction="left-to-right" evidence="18">
        <dbReference type="Rhea" id="RHEA:50157"/>
    </physiologicalReaction>
</comment>
<comment type="catalytic activity">
    <reaction evidence="9">
        <text>N-(5Z,8Z,11Z,14Z)-eicosatetraenoyl-gamma-aminobutanoate + O2 = N-(15S)-hydroperoxy-(5Z,8Z,11Z,13E)-eicosatetraenoyl-gamma-aminobutanoate</text>
        <dbReference type="Rhea" id="RHEA:50180"/>
        <dbReference type="ChEBI" id="CHEBI:15379"/>
        <dbReference type="ChEBI" id="CHEBI:132072"/>
        <dbReference type="ChEBI" id="CHEBI:132078"/>
    </reaction>
    <physiologicalReaction direction="left-to-right" evidence="17">
        <dbReference type="Rhea" id="RHEA:50181"/>
    </physiologicalReaction>
</comment>
<comment type="catalytic activity">
    <reaction evidence="9">
        <text>N-(5Z,8Z,11Z,14Z)-eicosatetraenoyl-glycine + O2 = N-(15S)-hydroperoxy-(5Z,8Z,11Z,13E)-eicosatetraenoyl-glycine</text>
        <dbReference type="Rhea" id="RHEA:50188"/>
        <dbReference type="ChEBI" id="CHEBI:15379"/>
        <dbReference type="ChEBI" id="CHEBI:59002"/>
        <dbReference type="ChEBI" id="CHEBI:132076"/>
    </reaction>
    <physiologicalReaction direction="left-to-right" evidence="17">
        <dbReference type="Rhea" id="RHEA:50189"/>
    </physiologicalReaction>
</comment>
<comment type="catalytic activity">
    <reaction evidence="9">
        <text>N-(5Z,8Z,11Z,14Z)-eicosatetraenoyl-L-alanine + O2 = N-(15S)-hydroperoxy-(5Z,8Z,11Z,13E)-eicosatetraenoyl-alanine</text>
        <dbReference type="Rhea" id="RHEA:50184"/>
        <dbReference type="ChEBI" id="CHEBI:15379"/>
        <dbReference type="ChEBI" id="CHEBI:132071"/>
        <dbReference type="ChEBI" id="CHEBI:132077"/>
    </reaction>
    <physiologicalReaction direction="left-to-right" evidence="17">
        <dbReference type="Rhea" id="RHEA:50185"/>
    </physiologicalReaction>
</comment>
<comment type="catalytic activity">
    <reaction evidence="3">
        <text>N-(5Z,8Z,11Z,14Z)-eicosatetraenoyl-taurine + O2 = N-(12S)-hydroperoxy-(5Z,8Z,10E,14Z)-eicosatetraenoyl-taurine</text>
        <dbReference type="Rhea" id="RHEA:50160"/>
        <dbReference type="ChEBI" id="CHEBI:15379"/>
        <dbReference type="ChEBI" id="CHEBI:132060"/>
        <dbReference type="ChEBI" id="CHEBI:132061"/>
    </reaction>
    <physiologicalReaction direction="left-to-right" evidence="3">
        <dbReference type="Rhea" id="RHEA:50161"/>
    </physiologicalReaction>
</comment>
<comment type="catalytic activity">
    <reaction evidence="3">
        <text>N-(5Z,8Z,11Z,14Z)-eicosatetraenoyl-gamma-aminobutanoate + O2 = N-(12S)-hydroperoxy-(5Z,8Z,10E,14Z)-eicosatetraenoyl-gamma-aminobutanoate</text>
        <dbReference type="Rhea" id="RHEA:50176"/>
        <dbReference type="ChEBI" id="CHEBI:15379"/>
        <dbReference type="ChEBI" id="CHEBI:132072"/>
        <dbReference type="ChEBI" id="CHEBI:132075"/>
    </reaction>
    <physiologicalReaction direction="left-to-right" evidence="3">
        <dbReference type="Rhea" id="RHEA:50177"/>
    </physiologicalReaction>
</comment>
<comment type="catalytic activity">
    <reaction evidence="3">
        <text>N-(5Z,8Z,11Z,14Z)-eicosatetraenoyl-glycine + O2 = N-(12S)-hydroperoxy-(5Z,8Z,10E,14Z)-eicosatetraenoyl-glycine</text>
        <dbReference type="Rhea" id="RHEA:50168"/>
        <dbReference type="ChEBI" id="CHEBI:15379"/>
        <dbReference type="ChEBI" id="CHEBI:59002"/>
        <dbReference type="ChEBI" id="CHEBI:132073"/>
    </reaction>
    <physiologicalReaction direction="left-to-right" evidence="3">
        <dbReference type="Rhea" id="RHEA:50169"/>
    </physiologicalReaction>
</comment>
<comment type="catalytic activity">
    <reaction evidence="3">
        <text>N-(5Z,8Z,11Z,14Z)-eicosatetraenoyl-L-alanine + O2 = N-(12S)-hydroperoxy-(5Z,8Z,10E,14Z)-eicosatetraenoyl-alanine</text>
        <dbReference type="Rhea" id="RHEA:50172"/>
        <dbReference type="ChEBI" id="CHEBI:15379"/>
        <dbReference type="ChEBI" id="CHEBI:132071"/>
        <dbReference type="ChEBI" id="CHEBI:132074"/>
    </reaction>
    <physiologicalReaction direction="left-to-right" evidence="3">
        <dbReference type="Rhea" id="RHEA:50173"/>
    </physiologicalReaction>
</comment>
<comment type="cofactor">
    <cofactor evidence="3 7">
        <name>Fe cation</name>
        <dbReference type="ChEBI" id="CHEBI:24875"/>
    </cofactor>
    <text evidence="3 7">Binds 1 Fe cation per subunit.</text>
</comment>
<comment type="biophysicochemical properties">
    <kinetics>
        <KM evidence="9">20 uM for (5Z,8Z,11Z,14Z)-eicosatetraenoate</KM>
        <KM evidence="9">49 uM for N-(5Z,8Z,11Z,14Z)-eicosatetraenoyl-glycine</KM>
        <KM evidence="9">98 uM for N-(5Z,8Z,11Z,14Z)-eicosatetraenoyl-alanine</KM>
        <KM evidence="9">48 uM for N-(5Z,8Z,11Z,14Z)-eicosatetraenoyl-gamma-aminobutanoate</KM>
        <KM evidence="8">20.5 uM for (5Z,8Z,11Z,14Z)-eicosatetraenoate</KM>
        <KM evidence="8">91.5 uM for (12S)-hydroperoxy-(5Z,8Z,10E,14Z)-eicosatetraenoate</KM>
        <text evidence="8">kcat is 22.2 sec(-1) with (5Z,8Z,11Z,14Z)-eicosatetraenoate as substrate (PubMed:15123652). kcat is 1.34 sec(-1) with (12S)-hydroperoxy-(5Z,8Z,10E,14Z)-eicosatetraenoate as substrate (PubMed:15123652).</text>
    </kinetics>
</comment>
<comment type="pathway">
    <text evidence="14">Lipid metabolism; hydroperoxy eicosatetraenoic acid biosynthesis.</text>
</comment>
<comment type="subunit">
    <text evidence="2">Interacts with PEBP1; in response to IL13/interleukin-13, prevents the interaction of PEBP1 with RAF1 to activate the ERK signaling cascade.</text>
</comment>
<comment type="subcellular location">
    <subcellularLocation>
        <location evidence="13">Cytoplasm</location>
        <location evidence="13">Cytosol</location>
    </subcellularLocation>
    <subcellularLocation>
        <location evidence="13">Cell membrane</location>
        <topology evidence="13">Peripheral membrane protein</topology>
    </subcellularLocation>
    <subcellularLocation>
        <location evidence="2">Lipid droplet</location>
    </subcellularLocation>
    <text evidence="4">Predominantly cytosolic; becomes enriched at membranes upon calcium binding. Translocates from the cytosol to the plasma membrane when stimulated by IL13/interleukin-13 and in macrophages binding apoptotic cells.</text>
</comment>
<comment type="tissue specificity">
    <text evidence="13">Detected in reticulocytes (at protein level).</text>
</comment>
<comment type="domain">
    <text evidence="1">The PLAT domain can bind calcium ions; this promotes association with membranes.</text>
</comment>
<comment type="similarity">
    <text evidence="16">Belongs to the lipoxygenase family.</text>
</comment>
<comment type="caution">
    <text evidence="16">According to the authors the mRNA described in PubMed:9600854 may be encoded by a gene different from ALOX15.</text>
</comment>
<protein>
    <recommendedName>
        <fullName evidence="2">Polyunsaturated fatty acid lipoxygenase ALOX15</fullName>
    </recommendedName>
    <alternativeName>
        <fullName evidence="4">12/15-lipoxygenase</fullName>
    </alternativeName>
    <alternativeName>
        <fullName evidence="5">Arachidonate 12-lipoxygenase, leukocyte-type</fullName>
        <shortName>12-LOX</shortName>
        <shortName>L-12LO</shortName>
        <ecNumber evidence="14">1.13.11.31</ecNumber>
    </alternativeName>
    <alternativeName>
        <fullName>Arachidonate 15-lipoxygenase</fullName>
        <shortName>15-LOX</shortName>
        <ecNumber evidence="13 14">1.13.11.33</ecNumber>
    </alternativeName>
    <alternativeName>
        <fullName evidence="2">Arachidonate omega-6 lipoxygenase</fullName>
    </alternativeName>
    <alternativeName>
        <fullName evidence="15">Erythroid cell-specific 15-lipoxygenase</fullName>
    </alternativeName>
    <alternativeName>
        <fullName evidence="5">Hepoxilin A3 synthase Alox15</fullName>
        <ecNumber evidence="5">1.13.11.-</ecNumber>
    </alternativeName>
    <alternativeName>
        <fullName evidence="2">Linoleate 13S-lipoxygenase</fullName>
        <ecNumber evidence="2">1.13.11.12</ecNumber>
    </alternativeName>
</protein>